<proteinExistence type="inferred from homology"/>
<gene>
    <name evidence="1" type="primary">rnz</name>
    <name type="ordered locus">SEQ_1429</name>
</gene>
<sequence>MELQFLGTGAGQPAKHRNVSSLVLKLLDEINEVWMFDCGEGTQRQILETTIKPRKIKKIFITHLHGDHIFGLPGFLSSRAFQASEEQTDLEIYGPVGIKSYVTNSIRISGSKLPYQIHYHEFDDTSMGKILETDKFIVYAERLAHTIFCMGYRVVQKDLEGTLDAEALRAVGVPFGPLFGKVKNGQDIELEDGTKIFAKDFISEPRKGKIITIIGDTRKTSASVRLAKDADVLVHESTYGKGDERMARNHGHSTNMQAAQIARDAGAKRLLLNHVSARFLGRDCRQMEKDAATIFENVKVVRDLEEVII</sequence>
<name>RNZ_STRE4</name>
<protein>
    <recommendedName>
        <fullName evidence="1">Ribonuclease Z</fullName>
        <shortName evidence="1">RNase Z</shortName>
        <ecNumber evidence="1">3.1.26.11</ecNumber>
    </recommendedName>
    <alternativeName>
        <fullName evidence="1">tRNA 3 endonuclease</fullName>
    </alternativeName>
    <alternativeName>
        <fullName evidence="1">tRNase Z</fullName>
    </alternativeName>
</protein>
<dbReference type="EC" id="3.1.26.11" evidence="1"/>
<dbReference type="EMBL" id="FM204883">
    <property type="protein sequence ID" value="CAW94300.1"/>
    <property type="molecule type" value="Genomic_DNA"/>
</dbReference>
<dbReference type="RefSeq" id="WP_012679746.1">
    <property type="nucleotide sequence ID" value="NC_012471.1"/>
</dbReference>
<dbReference type="SMR" id="C0MAM9"/>
<dbReference type="KEGG" id="seu:SEQ_1429"/>
<dbReference type="HOGENOM" id="CLU_031317_2_0_9"/>
<dbReference type="OrthoDB" id="9800940at2"/>
<dbReference type="Proteomes" id="UP000001365">
    <property type="component" value="Chromosome"/>
</dbReference>
<dbReference type="GO" id="GO:0042781">
    <property type="term" value="F:3'-tRNA processing endoribonuclease activity"/>
    <property type="evidence" value="ECO:0007669"/>
    <property type="project" value="UniProtKB-UniRule"/>
</dbReference>
<dbReference type="GO" id="GO:0008270">
    <property type="term" value="F:zinc ion binding"/>
    <property type="evidence" value="ECO:0007669"/>
    <property type="project" value="UniProtKB-UniRule"/>
</dbReference>
<dbReference type="CDD" id="cd07717">
    <property type="entry name" value="RNaseZ_ZiPD-like_MBL-fold"/>
    <property type="match status" value="1"/>
</dbReference>
<dbReference type="FunFam" id="3.60.15.10:FF:000002">
    <property type="entry name" value="Ribonuclease Z"/>
    <property type="match status" value="1"/>
</dbReference>
<dbReference type="Gene3D" id="3.60.15.10">
    <property type="entry name" value="Ribonuclease Z/Hydroxyacylglutathione hydrolase-like"/>
    <property type="match status" value="1"/>
</dbReference>
<dbReference type="HAMAP" id="MF_01818">
    <property type="entry name" value="RNase_Z_BN"/>
    <property type="match status" value="1"/>
</dbReference>
<dbReference type="InterPro" id="IPR001279">
    <property type="entry name" value="Metallo-B-lactamas"/>
</dbReference>
<dbReference type="InterPro" id="IPR036866">
    <property type="entry name" value="RibonucZ/Hydroxyglut_hydro"/>
</dbReference>
<dbReference type="InterPro" id="IPR013471">
    <property type="entry name" value="RNase_Z/BN"/>
</dbReference>
<dbReference type="NCBIfam" id="NF000801">
    <property type="entry name" value="PRK00055.1-3"/>
    <property type="match status" value="1"/>
</dbReference>
<dbReference type="NCBIfam" id="TIGR02651">
    <property type="entry name" value="RNase_Z"/>
    <property type="match status" value="1"/>
</dbReference>
<dbReference type="PANTHER" id="PTHR46018">
    <property type="entry name" value="ZINC PHOSPHODIESTERASE ELAC PROTEIN 1"/>
    <property type="match status" value="1"/>
</dbReference>
<dbReference type="PANTHER" id="PTHR46018:SF2">
    <property type="entry name" value="ZINC PHOSPHODIESTERASE ELAC PROTEIN 1"/>
    <property type="match status" value="1"/>
</dbReference>
<dbReference type="Pfam" id="PF00753">
    <property type="entry name" value="Lactamase_B"/>
    <property type="match status" value="1"/>
</dbReference>
<dbReference type="Pfam" id="PF12706">
    <property type="entry name" value="Lactamase_B_2"/>
    <property type="match status" value="1"/>
</dbReference>
<dbReference type="SUPFAM" id="SSF56281">
    <property type="entry name" value="Metallo-hydrolase/oxidoreductase"/>
    <property type="match status" value="1"/>
</dbReference>
<organism>
    <name type="scientific">Streptococcus equi subsp. equi (strain 4047)</name>
    <dbReference type="NCBI Taxonomy" id="553482"/>
    <lineage>
        <taxon>Bacteria</taxon>
        <taxon>Bacillati</taxon>
        <taxon>Bacillota</taxon>
        <taxon>Bacilli</taxon>
        <taxon>Lactobacillales</taxon>
        <taxon>Streptococcaceae</taxon>
        <taxon>Streptococcus</taxon>
    </lineage>
</organism>
<accession>C0MAM9</accession>
<feature type="chain" id="PRO_1000187989" description="Ribonuclease Z">
    <location>
        <begin position="1"/>
        <end position="309"/>
    </location>
</feature>
<feature type="active site" description="Proton acceptor" evidence="1">
    <location>
        <position position="67"/>
    </location>
</feature>
<feature type="binding site" evidence="1">
    <location>
        <position position="63"/>
    </location>
    <ligand>
        <name>Zn(2+)</name>
        <dbReference type="ChEBI" id="CHEBI:29105"/>
        <label>1</label>
        <note>catalytic</note>
    </ligand>
</feature>
<feature type="binding site" evidence="1">
    <location>
        <position position="65"/>
    </location>
    <ligand>
        <name>Zn(2+)</name>
        <dbReference type="ChEBI" id="CHEBI:29105"/>
        <label>1</label>
        <note>catalytic</note>
    </ligand>
</feature>
<feature type="binding site" evidence="1">
    <location>
        <position position="67"/>
    </location>
    <ligand>
        <name>Zn(2+)</name>
        <dbReference type="ChEBI" id="CHEBI:29105"/>
        <label>2</label>
        <note>catalytic</note>
    </ligand>
</feature>
<feature type="binding site" evidence="1">
    <location>
        <position position="68"/>
    </location>
    <ligand>
        <name>Zn(2+)</name>
        <dbReference type="ChEBI" id="CHEBI:29105"/>
        <label>2</label>
        <note>catalytic</note>
    </ligand>
</feature>
<feature type="binding site" evidence="1">
    <location>
        <position position="145"/>
    </location>
    <ligand>
        <name>Zn(2+)</name>
        <dbReference type="ChEBI" id="CHEBI:29105"/>
        <label>1</label>
        <note>catalytic</note>
    </ligand>
</feature>
<feature type="binding site" evidence="1">
    <location>
        <position position="216"/>
    </location>
    <ligand>
        <name>Zn(2+)</name>
        <dbReference type="ChEBI" id="CHEBI:29105"/>
        <label>1</label>
        <note>catalytic</note>
    </ligand>
</feature>
<feature type="binding site" evidence="1">
    <location>
        <position position="216"/>
    </location>
    <ligand>
        <name>Zn(2+)</name>
        <dbReference type="ChEBI" id="CHEBI:29105"/>
        <label>2</label>
        <note>catalytic</note>
    </ligand>
</feature>
<feature type="binding site" evidence="1">
    <location>
        <position position="274"/>
    </location>
    <ligand>
        <name>Zn(2+)</name>
        <dbReference type="ChEBI" id="CHEBI:29105"/>
        <label>2</label>
        <note>catalytic</note>
    </ligand>
</feature>
<reference key="1">
    <citation type="journal article" date="2009" name="PLoS Pathog.">
        <title>Genomic evidence for the evolution of Streptococcus equi: host restriction, increased virulence, and genetic exchange with human pathogens.</title>
        <authorList>
            <person name="Holden M.T.G."/>
            <person name="Heather Z."/>
            <person name="Paillot R."/>
            <person name="Steward K.F."/>
            <person name="Webb K."/>
            <person name="Ainslie F."/>
            <person name="Jourdan T."/>
            <person name="Bason N.C."/>
            <person name="Holroyd N.E."/>
            <person name="Mungall K."/>
            <person name="Quail M.A."/>
            <person name="Sanders M."/>
            <person name="Simmonds M."/>
            <person name="Willey D."/>
            <person name="Brooks K."/>
            <person name="Aanensen D.M."/>
            <person name="Spratt B.G."/>
            <person name="Jolley K.A."/>
            <person name="Maiden M.C.J."/>
            <person name="Kehoe M."/>
            <person name="Chanter N."/>
            <person name="Bentley S.D."/>
            <person name="Robinson C."/>
            <person name="Maskell D.J."/>
            <person name="Parkhill J."/>
            <person name="Waller A.S."/>
        </authorList>
    </citation>
    <scope>NUCLEOTIDE SEQUENCE [LARGE SCALE GENOMIC DNA]</scope>
    <source>
        <strain>4047</strain>
    </source>
</reference>
<keyword id="KW-0255">Endonuclease</keyword>
<keyword id="KW-0378">Hydrolase</keyword>
<keyword id="KW-0479">Metal-binding</keyword>
<keyword id="KW-0540">Nuclease</keyword>
<keyword id="KW-0819">tRNA processing</keyword>
<keyword id="KW-0862">Zinc</keyword>
<evidence type="ECO:0000255" key="1">
    <source>
        <dbReference type="HAMAP-Rule" id="MF_01818"/>
    </source>
</evidence>
<comment type="function">
    <text evidence="1">Zinc phosphodiesterase, which displays some tRNA 3'-processing endonuclease activity. Probably involved in tRNA maturation, by removing a 3'-trailer from precursor tRNA.</text>
</comment>
<comment type="catalytic activity">
    <reaction evidence="1">
        <text>Endonucleolytic cleavage of RNA, removing extra 3' nucleotides from tRNA precursor, generating 3' termini of tRNAs. A 3'-hydroxy group is left at the tRNA terminus and a 5'-phosphoryl group is left at the trailer molecule.</text>
        <dbReference type="EC" id="3.1.26.11"/>
    </reaction>
</comment>
<comment type="cofactor">
    <cofactor evidence="1">
        <name>Zn(2+)</name>
        <dbReference type="ChEBI" id="CHEBI:29105"/>
    </cofactor>
    <text evidence="1">Binds 2 Zn(2+) ions.</text>
</comment>
<comment type="subunit">
    <text evidence="1">Homodimer.</text>
</comment>
<comment type="similarity">
    <text evidence="1">Belongs to the RNase Z family.</text>
</comment>